<sequence length="372" mass="43149">MDKLRVLYDEFVTISKDNLERETGLSASDVDMDFDLNIFMTLVPVLEKKVCVITPTIEDDKIVTMMKYCSYQSFSFWFLKSGAVVKSVYNKLDDAEKEKFVATFKDMLLNVQTLISLNSMYTRLRQDTEDIVSDSKKIMEIVSHLRASTTENAAYQVLQQNNSFIISTLNKILSDENYLLKIIAVFDSKLISEKETLNEYKQLYTISSESLVYGIRCVSNLDISSVQLSNNKYVLFVKKMLPKIILFQNNDINAQQFANVISKIYTLIYRQLTSNVDVGCLLTDTIESTKTKISVEKFKQTGINNVQSLIKFISDNKKEYKTIISEEYLSKEDRIITILQNIVNEHDIKYDNNLLNMRDLIVTFRERYSYKF</sequence>
<protein>
    <recommendedName>
        <fullName>Virion morphogenesis protein OPG132</fullName>
    </recommendedName>
</protein>
<gene>
    <name type="primary">OPG132</name>
    <name type="ORF">A6L</name>
</gene>
<keyword id="KW-1035">Host cytoplasm</keyword>
<keyword id="KW-1185">Reference proteome</keyword>
<keyword id="KW-0946">Virion</keyword>
<evidence type="ECO:0000250" key="1">
    <source>
        <dbReference type="UniProtKB" id="P29192"/>
    </source>
</evidence>
<evidence type="ECO:0000305" key="2"/>
<name>PG132_VAR67</name>
<comment type="function">
    <text evidence="1">Lipid-bound viral membrane assembly protein that plays an essential role in immature virion (IV) to mature virion (MV) transition. Functions in both crescent-shaped viral membranes formation and its enclosure to form immature virions. In addition, participates in targeting mature virion proteins to sites of virion assembly to ensure their correct localization.</text>
</comment>
<comment type="subcellular location">
    <subcellularLocation>
        <location evidence="1">Host cytoplasm</location>
    </subcellularLocation>
    <subcellularLocation>
        <location evidence="1">Virion</location>
    </subcellularLocation>
    <text evidence="1">Predominantly present in the host cytoplasm while only a small amount is present in the virion.</text>
</comment>
<comment type="domain">
    <text evidence="1">The N-terminal domain is not required for crescent formation but is required for virion formation.</text>
</comment>
<comment type="similarity">
    <text evidence="2">Belongs to the orthopoxvirus OPG132 family.</text>
</comment>
<dbReference type="EMBL" id="X69198">
    <property type="protein sequence ID" value="CAA49051.1"/>
    <property type="molecule type" value="Genomic_DNA"/>
</dbReference>
<dbReference type="EMBL" id="X67116">
    <property type="protein sequence ID" value="CAA47514.1"/>
    <property type="molecule type" value="Genomic_DNA"/>
</dbReference>
<dbReference type="PIR" id="G36848">
    <property type="entry name" value="G36848"/>
</dbReference>
<dbReference type="RefSeq" id="NP_042154.1">
    <property type="nucleotide sequence ID" value="NC_001611.1"/>
</dbReference>
<dbReference type="SMR" id="P0DSR1"/>
<dbReference type="GeneID" id="1486536"/>
<dbReference type="KEGG" id="vg:1486536"/>
<dbReference type="Proteomes" id="UP000002060">
    <property type="component" value="Segment"/>
</dbReference>
<dbReference type="GO" id="GO:0030430">
    <property type="term" value="C:host cell cytoplasm"/>
    <property type="evidence" value="ECO:0007669"/>
    <property type="project" value="UniProtKB-SubCell"/>
</dbReference>
<dbReference type="GO" id="GO:0044423">
    <property type="term" value="C:virion component"/>
    <property type="evidence" value="ECO:0007669"/>
    <property type="project" value="UniProtKB-KW"/>
</dbReference>
<dbReference type="InterPro" id="IPR007008">
    <property type="entry name" value="Poxvirus_A6"/>
</dbReference>
<dbReference type="Pfam" id="PF04924">
    <property type="entry name" value="Pox_A6"/>
    <property type="match status" value="1"/>
</dbReference>
<reference key="1">
    <citation type="journal article" date="1991" name="Dokl. Akad. Nauk SSSR">
        <title>Creation of a clone library of fragments from the natural variola virus and study of the structural and functional organization of viral genes from a circle of hosts.</title>
        <authorList>
            <person name="Shchelkunov S.N."/>
            <person name="Marennikova S.S."/>
            <person name="Totmenin A.V."/>
            <person name="Blinov V.M."/>
            <person name="Chizhikov V.E."/>
            <person name="Gutorov V.V."/>
            <person name="Safronov P.F."/>
            <person name="Pozdnyakov S.G."/>
            <person name="Shelukhina E.M."/>
            <person name="Gashnikov P.V."/>
            <person name="Anjaparidze O.G."/>
            <person name="Sandakhchiev L.S."/>
        </authorList>
    </citation>
    <scope>NUCLEOTIDE SEQUENCE [GENOMIC DNA]</scope>
</reference>
<reference key="2">
    <citation type="journal article" date="1993" name="FEBS Lett.">
        <title>Genes of variola and vaccinia viruses necessary to overcome the host protective mechanisms.</title>
        <authorList>
            <person name="Shchelkunov S.N."/>
            <person name="Blinov V.M."/>
            <person name="Sandakhchiev L.S."/>
        </authorList>
    </citation>
    <scope>NUCLEOTIDE SEQUENCE [LARGE SCALE GENOMIC DNA]</scope>
</reference>
<organismHost>
    <name type="scientific">Homo sapiens</name>
    <name type="common">Human</name>
    <dbReference type="NCBI Taxonomy" id="9606"/>
</organismHost>
<organism>
    <name type="scientific">Variola virus (isolate Human/India/Ind3/1967)</name>
    <name type="common">VARV</name>
    <name type="synonym">Smallpox virus</name>
    <dbReference type="NCBI Taxonomy" id="587200"/>
    <lineage>
        <taxon>Viruses</taxon>
        <taxon>Varidnaviria</taxon>
        <taxon>Bamfordvirae</taxon>
        <taxon>Nucleocytoviricota</taxon>
        <taxon>Pokkesviricetes</taxon>
        <taxon>Chitovirales</taxon>
        <taxon>Poxviridae</taxon>
        <taxon>Chordopoxvirinae</taxon>
        <taxon>Orthopoxvirus</taxon>
        <taxon>Variola virus</taxon>
    </lineage>
</organism>
<accession>P0DSR1</accession>
<accession>P33833</accession>
<feature type="chain" id="PRO_0000099223" description="Virion morphogenesis protein OPG132">
    <location>
        <begin position="1"/>
        <end position="372"/>
    </location>
</feature>
<proteinExistence type="inferred from homology"/>